<protein>
    <recommendedName>
        <fullName evidence="1">UDP-3-O-acylglucosamine N-acyltransferase</fullName>
        <ecNumber evidence="1">2.3.1.191</ecNumber>
    </recommendedName>
</protein>
<dbReference type="EC" id="2.3.1.191" evidence="1"/>
<dbReference type="EMBL" id="AE017340">
    <property type="protein sequence ID" value="AAV81675.1"/>
    <property type="molecule type" value="Genomic_DNA"/>
</dbReference>
<dbReference type="RefSeq" id="WP_011234086.1">
    <property type="nucleotide sequence ID" value="NC_006512.1"/>
</dbReference>
<dbReference type="SMR" id="Q5R0Z4"/>
<dbReference type="STRING" id="283942.IL0835"/>
<dbReference type="GeneID" id="41335991"/>
<dbReference type="KEGG" id="ilo:IL0835"/>
<dbReference type="eggNOG" id="COG1044">
    <property type="taxonomic scope" value="Bacteria"/>
</dbReference>
<dbReference type="HOGENOM" id="CLU_049865_0_1_6"/>
<dbReference type="OrthoDB" id="9784739at2"/>
<dbReference type="UniPathway" id="UPA00973"/>
<dbReference type="Proteomes" id="UP000001171">
    <property type="component" value="Chromosome"/>
</dbReference>
<dbReference type="GO" id="GO:0016020">
    <property type="term" value="C:membrane"/>
    <property type="evidence" value="ECO:0007669"/>
    <property type="project" value="GOC"/>
</dbReference>
<dbReference type="GO" id="GO:0016410">
    <property type="term" value="F:N-acyltransferase activity"/>
    <property type="evidence" value="ECO:0007669"/>
    <property type="project" value="InterPro"/>
</dbReference>
<dbReference type="GO" id="GO:0009245">
    <property type="term" value="P:lipid A biosynthetic process"/>
    <property type="evidence" value="ECO:0007669"/>
    <property type="project" value="UniProtKB-UniRule"/>
</dbReference>
<dbReference type="CDD" id="cd03352">
    <property type="entry name" value="LbH_LpxD"/>
    <property type="match status" value="1"/>
</dbReference>
<dbReference type="Gene3D" id="1.20.5.170">
    <property type="match status" value="1"/>
</dbReference>
<dbReference type="Gene3D" id="2.160.10.10">
    <property type="entry name" value="Hexapeptide repeat proteins"/>
    <property type="match status" value="1"/>
</dbReference>
<dbReference type="Gene3D" id="3.40.1390.10">
    <property type="entry name" value="MurE/MurF, N-terminal domain"/>
    <property type="match status" value="1"/>
</dbReference>
<dbReference type="HAMAP" id="MF_00523">
    <property type="entry name" value="LpxD"/>
    <property type="match status" value="1"/>
</dbReference>
<dbReference type="InterPro" id="IPR001451">
    <property type="entry name" value="Hexapep"/>
</dbReference>
<dbReference type="InterPro" id="IPR007691">
    <property type="entry name" value="LpxD"/>
</dbReference>
<dbReference type="InterPro" id="IPR011004">
    <property type="entry name" value="Trimer_LpxA-like_sf"/>
</dbReference>
<dbReference type="InterPro" id="IPR020573">
    <property type="entry name" value="UDP_GlcNAc_AcTrfase_non-rep"/>
</dbReference>
<dbReference type="NCBIfam" id="TIGR01853">
    <property type="entry name" value="lipid_A_lpxD"/>
    <property type="match status" value="1"/>
</dbReference>
<dbReference type="NCBIfam" id="NF002060">
    <property type="entry name" value="PRK00892.1"/>
    <property type="match status" value="1"/>
</dbReference>
<dbReference type="PANTHER" id="PTHR43378">
    <property type="entry name" value="UDP-3-O-ACYLGLUCOSAMINE N-ACYLTRANSFERASE"/>
    <property type="match status" value="1"/>
</dbReference>
<dbReference type="PANTHER" id="PTHR43378:SF2">
    <property type="entry name" value="UDP-3-O-ACYLGLUCOSAMINE N-ACYLTRANSFERASE 1, MITOCHONDRIAL-RELATED"/>
    <property type="match status" value="1"/>
</dbReference>
<dbReference type="Pfam" id="PF00132">
    <property type="entry name" value="Hexapep"/>
    <property type="match status" value="2"/>
</dbReference>
<dbReference type="Pfam" id="PF04613">
    <property type="entry name" value="LpxD"/>
    <property type="match status" value="1"/>
</dbReference>
<dbReference type="SUPFAM" id="SSF51161">
    <property type="entry name" value="Trimeric LpxA-like enzymes"/>
    <property type="match status" value="1"/>
</dbReference>
<dbReference type="PROSITE" id="PS00101">
    <property type="entry name" value="HEXAPEP_TRANSFERASES"/>
    <property type="match status" value="1"/>
</dbReference>
<reference key="1">
    <citation type="journal article" date="2004" name="Proc. Natl. Acad. Sci. U.S.A.">
        <title>Genome sequence of the deep-sea gamma-proteobacterium Idiomarina loihiensis reveals amino acid fermentation as a source of carbon and energy.</title>
        <authorList>
            <person name="Hou S."/>
            <person name="Saw J.H."/>
            <person name="Lee K.S."/>
            <person name="Freitas T.A."/>
            <person name="Belisle C."/>
            <person name="Kawarabayasi Y."/>
            <person name="Donachie S.P."/>
            <person name="Pikina A."/>
            <person name="Galperin M.Y."/>
            <person name="Koonin E.V."/>
            <person name="Makarova K.S."/>
            <person name="Omelchenko M.V."/>
            <person name="Sorokin A."/>
            <person name="Wolf Y.I."/>
            <person name="Li Q.X."/>
            <person name="Keum Y.S."/>
            <person name="Campbell S."/>
            <person name="Denery J."/>
            <person name="Aizawa S."/>
            <person name="Shibata S."/>
            <person name="Malahoff A."/>
            <person name="Alam M."/>
        </authorList>
    </citation>
    <scope>NUCLEOTIDE SEQUENCE [LARGE SCALE GENOMIC DNA]</scope>
    <source>
        <strain>ATCC BAA-735 / DSM 15497 / L2-TR</strain>
    </source>
</reference>
<proteinExistence type="inferred from homology"/>
<name>LPXD_IDILO</name>
<evidence type="ECO:0000255" key="1">
    <source>
        <dbReference type="HAMAP-Rule" id="MF_00523"/>
    </source>
</evidence>
<sequence>MSEYTLQQLADHVGGEVRGNSQLPILRVATLQSATGDAIAFLANSRYKSQLETTSAGAVIVSEKDDSDAIDNAIRVVNPYAAFARIAQLLDTTPKPAHGIAESAKIAPSATIGQNVSIGEYTVIDEGVIIGDNTSIGPHCYIGPETQIGAGCTLWSGVKIYHRCVIGDDCLFHSGSIIGADGFGWAPDNGKWLKIPQLGRVVIKDNVEIGASTTVDRGALDDTVISSGCIIDNQCQIAHNVFIDEDTAIAGCTVLAGSCRIGKRCMIGGASAINGHISVCDDVQIMGFAMVIKEITEPGVYASGIPASGHREWRRNGARFRQLDDLFKRVKELEKQADDNN</sequence>
<accession>Q5R0Z4</accession>
<gene>
    <name evidence="1" type="primary">lpxD</name>
    <name type="ordered locus">IL0835</name>
</gene>
<organism>
    <name type="scientific">Idiomarina loihiensis (strain ATCC BAA-735 / DSM 15497 / L2-TR)</name>
    <dbReference type="NCBI Taxonomy" id="283942"/>
    <lineage>
        <taxon>Bacteria</taxon>
        <taxon>Pseudomonadati</taxon>
        <taxon>Pseudomonadota</taxon>
        <taxon>Gammaproteobacteria</taxon>
        <taxon>Alteromonadales</taxon>
        <taxon>Idiomarinaceae</taxon>
        <taxon>Idiomarina</taxon>
    </lineage>
</organism>
<comment type="function">
    <text evidence="1">Catalyzes the N-acylation of UDP-3-O-acylglucosamine using 3-hydroxyacyl-ACP as the acyl donor. Is involved in the biosynthesis of lipid A, a phosphorylated glycolipid that anchors the lipopolysaccharide to the outer membrane of the cell.</text>
</comment>
<comment type="catalytic activity">
    <reaction evidence="1">
        <text>a UDP-3-O-[(3R)-3-hydroxyacyl]-alpha-D-glucosamine + a (3R)-hydroxyacyl-[ACP] = a UDP-2-N,3-O-bis[(3R)-3-hydroxyacyl]-alpha-D-glucosamine + holo-[ACP] + H(+)</text>
        <dbReference type="Rhea" id="RHEA:53836"/>
        <dbReference type="Rhea" id="RHEA-COMP:9685"/>
        <dbReference type="Rhea" id="RHEA-COMP:9945"/>
        <dbReference type="ChEBI" id="CHEBI:15378"/>
        <dbReference type="ChEBI" id="CHEBI:64479"/>
        <dbReference type="ChEBI" id="CHEBI:78827"/>
        <dbReference type="ChEBI" id="CHEBI:137740"/>
        <dbReference type="ChEBI" id="CHEBI:137748"/>
        <dbReference type="EC" id="2.3.1.191"/>
    </reaction>
</comment>
<comment type="pathway">
    <text evidence="1">Bacterial outer membrane biogenesis; LPS lipid A biosynthesis.</text>
</comment>
<comment type="subunit">
    <text evidence="1">Homotrimer.</text>
</comment>
<comment type="similarity">
    <text evidence="1">Belongs to the transferase hexapeptide repeat family. LpxD subfamily.</text>
</comment>
<feature type="chain" id="PRO_0000264385" description="UDP-3-O-acylglucosamine N-acyltransferase">
    <location>
        <begin position="1"/>
        <end position="341"/>
    </location>
</feature>
<feature type="active site" description="Proton acceptor" evidence="1">
    <location>
        <position position="239"/>
    </location>
</feature>
<keyword id="KW-0012">Acyltransferase</keyword>
<keyword id="KW-0441">Lipid A biosynthesis</keyword>
<keyword id="KW-0444">Lipid biosynthesis</keyword>
<keyword id="KW-0443">Lipid metabolism</keyword>
<keyword id="KW-1185">Reference proteome</keyword>
<keyword id="KW-0677">Repeat</keyword>
<keyword id="KW-0808">Transferase</keyword>